<name>UXAC_ECOHS</name>
<keyword id="KW-0413">Isomerase</keyword>
<organism>
    <name type="scientific">Escherichia coli O9:H4 (strain HS)</name>
    <dbReference type="NCBI Taxonomy" id="331112"/>
    <lineage>
        <taxon>Bacteria</taxon>
        <taxon>Pseudomonadati</taxon>
        <taxon>Pseudomonadota</taxon>
        <taxon>Gammaproteobacteria</taxon>
        <taxon>Enterobacterales</taxon>
        <taxon>Enterobacteriaceae</taxon>
        <taxon>Escherichia</taxon>
    </lineage>
</organism>
<sequence>MTPFMTEDFLLDTEFARRLYHDYAKDQPIFDYHCHLPPQQIAEDYRFKNLYDIWLKGDHYKWRAMRTNGVAERLCTGDASDREKFDAWAATVPHTIGNPLYHWTHLELRRPFGITGKLLSPSTADEIWNECNELLAQDNFSARGIMQQMNVKMVGTTDDPIDSLEHHAEIAKDGSFTIKVLPSWRPDKAFNIEQATFNDYMAKLGEVSDTDIRRFADLQTALTKRLDHFAAHGCKVSDHALDVVMFAEANEAELDSILARRLAGETLSEHEVAQFKTAVLVFLGAEYARRGWVQQYHIGALRNNNLRQFKLLGPDVGFDSINDRPMAEELSKLLSKQNEENLLPKTILYCLNPRDNEVLGTMIGNFQGEGMPGKMQFGSGWWFNDQKDGMERQMTQLAQLGLLSRFVGMLTDSRSFLSYTRHEYFRRILCQMIGRWVEAGEAPADINLLGEMVKNICFNNARDYFAIELN</sequence>
<comment type="catalytic activity">
    <reaction evidence="1">
        <text>D-glucuronate = D-fructuronate</text>
        <dbReference type="Rhea" id="RHEA:13049"/>
        <dbReference type="ChEBI" id="CHEBI:58720"/>
        <dbReference type="ChEBI" id="CHEBI:59863"/>
        <dbReference type="EC" id="5.3.1.12"/>
    </reaction>
</comment>
<comment type="catalytic activity">
    <reaction evidence="1">
        <text>aldehydo-D-galacturonate = keto-D-tagaturonate</text>
        <dbReference type="Rhea" id="RHEA:27702"/>
        <dbReference type="ChEBI" id="CHEBI:12952"/>
        <dbReference type="ChEBI" id="CHEBI:17886"/>
        <dbReference type="EC" id="5.3.1.12"/>
    </reaction>
</comment>
<comment type="pathway">
    <text evidence="1">Carbohydrate metabolism; pentose and glucuronate interconversion.</text>
</comment>
<comment type="similarity">
    <text evidence="1">Belongs to the metallo-dependent hydrolases superfamily. Uronate isomerase family.</text>
</comment>
<proteinExistence type="inferred from homology"/>
<dbReference type="EC" id="5.3.1.12" evidence="1"/>
<dbReference type="EMBL" id="CP000802">
    <property type="protein sequence ID" value="ABV07504.1"/>
    <property type="molecule type" value="Genomic_DNA"/>
</dbReference>
<dbReference type="RefSeq" id="WP_000187442.1">
    <property type="nucleotide sequence ID" value="NC_009800.1"/>
</dbReference>
<dbReference type="SMR" id="A8A4Q0"/>
<dbReference type="GeneID" id="93778895"/>
<dbReference type="KEGG" id="ecx:EcHS_A3275"/>
<dbReference type="HOGENOM" id="CLU_044465_1_0_6"/>
<dbReference type="UniPathway" id="UPA00246"/>
<dbReference type="GO" id="GO:0008880">
    <property type="term" value="F:glucuronate isomerase activity"/>
    <property type="evidence" value="ECO:0007669"/>
    <property type="project" value="UniProtKB-UniRule"/>
</dbReference>
<dbReference type="GO" id="GO:0019698">
    <property type="term" value="P:D-galacturonate catabolic process"/>
    <property type="evidence" value="ECO:0007669"/>
    <property type="project" value="TreeGrafter"/>
</dbReference>
<dbReference type="GO" id="GO:0042840">
    <property type="term" value="P:D-glucuronate catabolic process"/>
    <property type="evidence" value="ECO:0007669"/>
    <property type="project" value="TreeGrafter"/>
</dbReference>
<dbReference type="FunFam" id="1.10.2020.10:FF:000001">
    <property type="entry name" value="Uronate isomerase"/>
    <property type="match status" value="1"/>
</dbReference>
<dbReference type="Gene3D" id="3.20.20.140">
    <property type="entry name" value="Metal-dependent hydrolases"/>
    <property type="match status" value="1"/>
</dbReference>
<dbReference type="Gene3D" id="1.10.2020.10">
    <property type="entry name" value="uronate isomerase, domain 2, chain A"/>
    <property type="match status" value="1"/>
</dbReference>
<dbReference type="HAMAP" id="MF_00675">
    <property type="entry name" value="UxaC"/>
    <property type="match status" value="1"/>
</dbReference>
<dbReference type="InterPro" id="IPR032466">
    <property type="entry name" value="Metal_Hydrolase"/>
</dbReference>
<dbReference type="InterPro" id="IPR003766">
    <property type="entry name" value="Uronate_isomerase"/>
</dbReference>
<dbReference type="NCBIfam" id="NF002794">
    <property type="entry name" value="PRK02925.1"/>
    <property type="match status" value="1"/>
</dbReference>
<dbReference type="PANTHER" id="PTHR30068">
    <property type="entry name" value="URONATE ISOMERASE"/>
    <property type="match status" value="1"/>
</dbReference>
<dbReference type="PANTHER" id="PTHR30068:SF4">
    <property type="entry name" value="URONATE ISOMERASE"/>
    <property type="match status" value="1"/>
</dbReference>
<dbReference type="Pfam" id="PF02614">
    <property type="entry name" value="UxaC"/>
    <property type="match status" value="1"/>
</dbReference>
<dbReference type="SUPFAM" id="SSF51556">
    <property type="entry name" value="Metallo-dependent hydrolases"/>
    <property type="match status" value="1"/>
</dbReference>
<feature type="chain" id="PRO_1000061951" description="Uronate isomerase">
    <location>
        <begin position="1"/>
        <end position="470"/>
    </location>
</feature>
<gene>
    <name evidence="1" type="primary">uxaC</name>
    <name type="ordered locus">EcHS_A3275</name>
</gene>
<accession>A8A4Q0</accession>
<evidence type="ECO:0000255" key="1">
    <source>
        <dbReference type="HAMAP-Rule" id="MF_00675"/>
    </source>
</evidence>
<protein>
    <recommendedName>
        <fullName evidence="1">Uronate isomerase</fullName>
        <ecNumber evidence="1">5.3.1.12</ecNumber>
    </recommendedName>
    <alternativeName>
        <fullName evidence="1">Glucuronate isomerase</fullName>
    </alternativeName>
    <alternativeName>
        <fullName evidence="1">Uronic isomerase</fullName>
    </alternativeName>
</protein>
<reference key="1">
    <citation type="journal article" date="2008" name="J. Bacteriol.">
        <title>The pangenome structure of Escherichia coli: comparative genomic analysis of E. coli commensal and pathogenic isolates.</title>
        <authorList>
            <person name="Rasko D.A."/>
            <person name="Rosovitz M.J."/>
            <person name="Myers G.S.A."/>
            <person name="Mongodin E.F."/>
            <person name="Fricke W.F."/>
            <person name="Gajer P."/>
            <person name="Crabtree J."/>
            <person name="Sebaihia M."/>
            <person name="Thomson N.R."/>
            <person name="Chaudhuri R."/>
            <person name="Henderson I.R."/>
            <person name="Sperandio V."/>
            <person name="Ravel J."/>
        </authorList>
    </citation>
    <scope>NUCLEOTIDE SEQUENCE [LARGE SCALE GENOMIC DNA]</scope>
    <source>
        <strain>HS</strain>
    </source>
</reference>